<gene>
    <name evidence="1" type="primary">dnaJ</name>
    <name type="ordered locus">NMB0059</name>
</gene>
<proteinExistence type="inferred from homology"/>
<reference key="1">
    <citation type="journal article" date="2000" name="Science">
        <title>Complete genome sequence of Neisseria meningitidis serogroup B strain MC58.</title>
        <authorList>
            <person name="Tettelin H."/>
            <person name="Saunders N.J."/>
            <person name="Heidelberg J.F."/>
            <person name="Jeffries A.C."/>
            <person name="Nelson K.E."/>
            <person name="Eisen J.A."/>
            <person name="Ketchum K.A."/>
            <person name="Hood D.W."/>
            <person name="Peden J.F."/>
            <person name="Dodson R.J."/>
            <person name="Nelson W.C."/>
            <person name="Gwinn M.L."/>
            <person name="DeBoy R.T."/>
            <person name="Peterson J.D."/>
            <person name="Hickey E.K."/>
            <person name="Haft D.H."/>
            <person name="Salzberg S.L."/>
            <person name="White O."/>
            <person name="Fleischmann R.D."/>
            <person name="Dougherty B.A."/>
            <person name="Mason T.M."/>
            <person name="Ciecko A."/>
            <person name="Parksey D.S."/>
            <person name="Blair E."/>
            <person name="Cittone H."/>
            <person name="Clark E.B."/>
            <person name="Cotton M.D."/>
            <person name="Utterback T.R."/>
            <person name="Khouri H.M."/>
            <person name="Qin H."/>
            <person name="Vamathevan J.J."/>
            <person name="Gill J."/>
            <person name="Scarlato V."/>
            <person name="Masignani V."/>
            <person name="Pizza M."/>
            <person name="Grandi G."/>
            <person name="Sun L."/>
            <person name="Smith H.O."/>
            <person name="Fraser C.M."/>
            <person name="Moxon E.R."/>
            <person name="Rappuoli R."/>
            <person name="Venter J.C."/>
        </authorList>
    </citation>
    <scope>NUCLEOTIDE SEQUENCE [LARGE SCALE GENOMIC DNA]</scope>
    <source>
        <strain>ATCC BAA-335 / MC58</strain>
    </source>
</reference>
<accession>P63969</accession>
<accession>P57107</accession>
<sequence length="373" mass="40585">MSNQDFYATLGVARTATDDEIKKAYRKLAMKYHPDRNPDNKEAEEKFKEVQKAYETLSDKEKRAMYDQYGHAAFEGGGQGGFGGFGGFGGAQGFDFGDIFSQMFGGGSGRAQPDYQGEDVQVGIEITLEEAAKGVKKRINIPTYEACDVCNGSGAKPGTSPETCPTCKGSGTVHIQQAIFRMQQTCPTCHGAGKHIKEPCVKCRGAGRNKAVKTVEVNIPAGIDDGQRIRLSGEGGPGMHGAPAGDLYVTVRIRAHKIFQRDGLDLHCELPISFATAALGGELEVPTLDGKVKLTVPKETQTGRRMRVKGKGVKSLRSSATGDLYCHIVVETPVNLTDRQKELLEEFERISTGLENQTPRKKSFLDKLRDLFD</sequence>
<organism>
    <name type="scientific">Neisseria meningitidis serogroup B (strain ATCC BAA-335 / MC58)</name>
    <dbReference type="NCBI Taxonomy" id="122586"/>
    <lineage>
        <taxon>Bacteria</taxon>
        <taxon>Pseudomonadati</taxon>
        <taxon>Pseudomonadota</taxon>
        <taxon>Betaproteobacteria</taxon>
        <taxon>Neisseriales</taxon>
        <taxon>Neisseriaceae</taxon>
        <taxon>Neisseria</taxon>
    </lineage>
</organism>
<evidence type="ECO:0000255" key="1">
    <source>
        <dbReference type="HAMAP-Rule" id="MF_01152"/>
    </source>
</evidence>
<name>DNAJ_NEIMB</name>
<feature type="chain" id="PRO_0000070840" description="Chaperone protein DnaJ">
    <location>
        <begin position="1"/>
        <end position="373"/>
    </location>
</feature>
<feature type="domain" description="J" evidence="1">
    <location>
        <begin position="5"/>
        <end position="70"/>
    </location>
</feature>
<feature type="repeat" description="CXXCXGXG motif">
    <location>
        <begin position="147"/>
        <end position="154"/>
    </location>
</feature>
<feature type="repeat" description="CXXCXGXG motif">
    <location>
        <begin position="164"/>
        <end position="171"/>
    </location>
</feature>
<feature type="repeat" description="CXXCXGXG motif">
    <location>
        <begin position="186"/>
        <end position="193"/>
    </location>
</feature>
<feature type="repeat" description="CXXCXGXG motif">
    <location>
        <begin position="200"/>
        <end position="207"/>
    </location>
</feature>
<feature type="zinc finger region" description="CR-type" evidence="1">
    <location>
        <begin position="134"/>
        <end position="212"/>
    </location>
</feature>
<feature type="binding site" evidence="1">
    <location>
        <position position="147"/>
    </location>
    <ligand>
        <name>Zn(2+)</name>
        <dbReference type="ChEBI" id="CHEBI:29105"/>
        <label>1</label>
    </ligand>
</feature>
<feature type="binding site" evidence="1">
    <location>
        <position position="150"/>
    </location>
    <ligand>
        <name>Zn(2+)</name>
        <dbReference type="ChEBI" id="CHEBI:29105"/>
        <label>1</label>
    </ligand>
</feature>
<feature type="binding site" evidence="1">
    <location>
        <position position="164"/>
    </location>
    <ligand>
        <name>Zn(2+)</name>
        <dbReference type="ChEBI" id="CHEBI:29105"/>
        <label>2</label>
    </ligand>
</feature>
<feature type="binding site" evidence="1">
    <location>
        <position position="167"/>
    </location>
    <ligand>
        <name>Zn(2+)</name>
        <dbReference type="ChEBI" id="CHEBI:29105"/>
        <label>2</label>
    </ligand>
</feature>
<feature type="binding site" evidence="1">
    <location>
        <position position="186"/>
    </location>
    <ligand>
        <name>Zn(2+)</name>
        <dbReference type="ChEBI" id="CHEBI:29105"/>
        <label>2</label>
    </ligand>
</feature>
<feature type="binding site" evidence="1">
    <location>
        <position position="189"/>
    </location>
    <ligand>
        <name>Zn(2+)</name>
        <dbReference type="ChEBI" id="CHEBI:29105"/>
        <label>2</label>
    </ligand>
</feature>
<feature type="binding site" evidence="1">
    <location>
        <position position="200"/>
    </location>
    <ligand>
        <name>Zn(2+)</name>
        <dbReference type="ChEBI" id="CHEBI:29105"/>
        <label>1</label>
    </ligand>
</feature>
<feature type="binding site" evidence="1">
    <location>
        <position position="203"/>
    </location>
    <ligand>
        <name>Zn(2+)</name>
        <dbReference type="ChEBI" id="CHEBI:29105"/>
        <label>1</label>
    </ligand>
</feature>
<dbReference type="EMBL" id="AE002098">
    <property type="protein sequence ID" value="AAF40528.1"/>
    <property type="molecule type" value="Genomic_DNA"/>
</dbReference>
<dbReference type="PIR" id="D81242">
    <property type="entry name" value="D81242"/>
</dbReference>
<dbReference type="RefSeq" id="NP_273124.1">
    <property type="nucleotide sequence ID" value="NC_003112.2"/>
</dbReference>
<dbReference type="RefSeq" id="WP_002215274.1">
    <property type="nucleotide sequence ID" value="NC_003112.2"/>
</dbReference>
<dbReference type="SMR" id="P63969"/>
<dbReference type="FunCoup" id="P63969">
    <property type="interactions" value="550"/>
</dbReference>
<dbReference type="STRING" id="122586.NMB0059"/>
<dbReference type="PaxDb" id="122586-NMB0059"/>
<dbReference type="GeneID" id="93387140"/>
<dbReference type="KEGG" id="nme:NMB0059"/>
<dbReference type="PATRIC" id="fig|122586.8.peg.95"/>
<dbReference type="HOGENOM" id="CLU_017633_0_7_4"/>
<dbReference type="InParanoid" id="P63969"/>
<dbReference type="OrthoDB" id="9779889at2"/>
<dbReference type="Proteomes" id="UP000000425">
    <property type="component" value="Chromosome"/>
</dbReference>
<dbReference type="GO" id="GO:0005737">
    <property type="term" value="C:cytoplasm"/>
    <property type="evidence" value="ECO:0000318"/>
    <property type="project" value="GO_Central"/>
</dbReference>
<dbReference type="GO" id="GO:0005524">
    <property type="term" value="F:ATP binding"/>
    <property type="evidence" value="ECO:0007669"/>
    <property type="project" value="InterPro"/>
</dbReference>
<dbReference type="GO" id="GO:0031072">
    <property type="term" value="F:heat shock protein binding"/>
    <property type="evidence" value="ECO:0007669"/>
    <property type="project" value="InterPro"/>
</dbReference>
<dbReference type="GO" id="GO:0051082">
    <property type="term" value="F:unfolded protein binding"/>
    <property type="evidence" value="ECO:0000318"/>
    <property type="project" value="GO_Central"/>
</dbReference>
<dbReference type="GO" id="GO:0008270">
    <property type="term" value="F:zinc ion binding"/>
    <property type="evidence" value="ECO:0007669"/>
    <property type="project" value="UniProtKB-UniRule"/>
</dbReference>
<dbReference type="GO" id="GO:0051085">
    <property type="term" value="P:chaperone cofactor-dependent protein refolding"/>
    <property type="evidence" value="ECO:0000318"/>
    <property type="project" value="GO_Central"/>
</dbReference>
<dbReference type="GO" id="GO:0006260">
    <property type="term" value="P:DNA replication"/>
    <property type="evidence" value="ECO:0007669"/>
    <property type="project" value="UniProtKB-KW"/>
</dbReference>
<dbReference type="GO" id="GO:0042026">
    <property type="term" value="P:protein refolding"/>
    <property type="evidence" value="ECO:0000318"/>
    <property type="project" value="GO_Central"/>
</dbReference>
<dbReference type="GO" id="GO:0009408">
    <property type="term" value="P:response to heat"/>
    <property type="evidence" value="ECO:0007669"/>
    <property type="project" value="InterPro"/>
</dbReference>
<dbReference type="CDD" id="cd06257">
    <property type="entry name" value="DnaJ"/>
    <property type="match status" value="1"/>
</dbReference>
<dbReference type="CDD" id="cd10747">
    <property type="entry name" value="DnaJ_C"/>
    <property type="match status" value="1"/>
</dbReference>
<dbReference type="CDD" id="cd10719">
    <property type="entry name" value="DnaJ_zf"/>
    <property type="match status" value="1"/>
</dbReference>
<dbReference type="FunFam" id="1.10.287.110:FF:000099">
    <property type="entry name" value="Chaperone protein DnaJ"/>
    <property type="match status" value="1"/>
</dbReference>
<dbReference type="FunFam" id="2.10.230.10:FF:000002">
    <property type="entry name" value="Molecular chaperone DnaJ"/>
    <property type="match status" value="1"/>
</dbReference>
<dbReference type="FunFam" id="2.60.260.20:FF:000004">
    <property type="entry name" value="Molecular chaperone DnaJ"/>
    <property type="match status" value="1"/>
</dbReference>
<dbReference type="Gene3D" id="1.10.287.110">
    <property type="entry name" value="DnaJ domain"/>
    <property type="match status" value="1"/>
</dbReference>
<dbReference type="Gene3D" id="2.10.230.10">
    <property type="entry name" value="Heat shock protein DnaJ, cysteine-rich domain"/>
    <property type="match status" value="1"/>
</dbReference>
<dbReference type="Gene3D" id="2.60.260.20">
    <property type="entry name" value="Urease metallochaperone UreE, N-terminal domain"/>
    <property type="match status" value="2"/>
</dbReference>
<dbReference type="HAMAP" id="MF_01152">
    <property type="entry name" value="DnaJ"/>
    <property type="match status" value="1"/>
</dbReference>
<dbReference type="InterPro" id="IPR012724">
    <property type="entry name" value="DnaJ"/>
</dbReference>
<dbReference type="InterPro" id="IPR002939">
    <property type="entry name" value="DnaJ_C"/>
</dbReference>
<dbReference type="InterPro" id="IPR001623">
    <property type="entry name" value="DnaJ_domain"/>
</dbReference>
<dbReference type="InterPro" id="IPR018253">
    <property type="entry name" value="DnaJ_domain_CS"/>
</dbReference>
<dbReference type="InterPro" id="IPR008971">
    <property type="entry name" value="HSP40/DnaJ_pept-bd"/>
</dbReference>
<dbReference type="InterPro" id="IPR001305">
    <property type="entry name" value="HSP_DnaJ_Cys-rich_dom"/>
</dbReference>
<dbReference type="InterPro" id="IPR036410">
    <property type="entry name" value="HSP_DnaJ_Cys-rich_dom_sf"/>
</dbReference>
<dbReference type="InterPro" id="IPR036869">
    <property type="entry name" value="J_dom_sf"/>
</dbReference>
<dbReference type="NCBIfam" id="TIGR02349">
    <property type="entry name" value="DnaJ_bact"/>
    <property type="match status" value="1"/>
</dbReference>
<dbReference type="NCBIfam" id="NF008035">
    <property type="entry name" value="PRK10767.1"/>
    <property type="match status" value="1"/>
</dbReference>
<dbReference type="PANTHER" id="PTHR43096:SF48">
    <property type="entry name" value="CHAPERONE PROTEIN DNAJ"/>
    <property type="match status" value="1"/>
</dbReference>
<dbReference type="PANTHER" id="PTHR43096">
    <property type="entry name" value="DNAJ HOMOLOG 1, MITOCHONDRIAL-RELATED"/>
    <property type="match status" value="1"/>
</dbReference>
<dbReference type="Pfam" id="PF00226">
    <property type="entry name" value="DnaJ"/>
    <property type="match status" value="1"/>
</dbReference>
<dbReference type="Pfam" id="PF01556">
    <property type="entry name" value="DnaJ_C"/>
    <property type="match status" value="1"/>
</dbReference>
<dbReference type="Pfam" id="PF00684">
    <property type="entry name" value="DnaJ_CXXCXGXG"/>
    <property type="match status" value="1"/>
</dbReference>
<dbReference type="PRINTS" id="PR00625">
    <property type="entry name" value="JDOMAIN"/>
</dbReference>
<dbReference type="SMART" id="SM00271">
    <property type="entry name" value="DnaJ"/>
    <property type="match status" value="1"/>
</dbReference>
<dbReference type="SUPFAM" id="SSF46565">
    <property type="entry name" value="Chaperone J-domain"/>
    <property type="match status" value="1"/>
</dbReference>
<dbReference type="SUPFAM" id="SSF57938">
    <property type="entry name" value="DnaJ/Hsp40 cysteine-rich domain"/>
    <property type="match status" value="1"/>
</dbReference>
<dbReference type="SUPFAM" id="SSF49493">
    <property type="entry name" value="HSP40/DnaJ peptide-binding domain"/>
    <property type="match status" value="2"/>
</dbReference>
<dbReference type="PROSITE" id="PS00636">
    <property type="entry name" value="DNAJ_1"/>
    <property type="match status" value="1"/>
</dbReference>
<dbReference type="PROSITE" id="PS50076">
    <property type="entry name" value="DNAJ_2"/>
    <property type="match status" value="1"/>
</dbReference>
<dbReference type="PROSITE" id="PS51188">
    <property type="entry name" value="ZF_CR"/>
    <property type="match status" value="1"/>
</dbReference>
<keyword id="KW-0143">Chaperone</keyword>
<keyword id="KW-0963">Cytoplasm</keyword>
<keyword id="KW-0235">DNA replication</keyword>
<keyword id="KW-0479">Metal-binding</keyword>
<keyword id="KW-1185">Reference proteome</keyword>
<keyword id="KW-0677">Repeat</keyword>
<keyword id="KW-0346">Stress response</keyword>
<keyword id="KW-0862">Zinc</keyword>
<keyword id="KW-0863">Zinc-finger</keyword>
<protein>
    <recommendedName>
        <fullName evidence="1">Chaperone protein DnaJ</fullName>
    </recommendedName>
</protein>
<comment type="function">
    <text evidence="1">Participates actively in the response to hyperosmotic and heat shock by preventing the aggregation of stress-denatured proteins and by disaggregating proteins, also in an autonomous, DnaK-independent fashion. Unfolded proteins bind initially to DnaJ; upon interaction with the DnaJ-bound protein, DnaK hydrolyzes its bound ATP, resulting in the formation of a stable complex. GrpE releases ADP from DnaK; ATP binding to DnaK triggers the release of the substrate protein, thus completing the reaction cycle. Several rounds of ATP-dependent interactions between DnaJ, DnaK and GrpE are required for fully efficient folding. Also involved, together with DnaK and GrpE, in the DNA replication of plasmids through activation of initiation proteins.</text>
</comment>
<comment type="cofactor">
    <cofactor evidence="1">
        <name>Zn(2+)</name>
        <dbReference type="ChEBI" id="CHEBI:29105"/>
    </cofactor>
    <text evidence="1">Binds 2 Zn(2+) ions per monomer.</text>
</comment>
<comment type="subunit">
    <text evidence="1">Homodimer.</text>
</comment>
<comment type="subcellular location">
    <subcellularLocation>
        <location evidence="1">Cytoplasm</location>
    </subcellularLocation>
</comment>
<comment type="domain">
    <text evidence="1">The J domain is necessary and sufficient to stimulate DnaK ATPase activity. Zinc center 1 plays an important role in the autonomous, DnaK-independent chaperone activity of DnaJ. Zinc center 2 is essential for interaction with DnaK and for DnaJ activity.</text>
</comment>
<comment type="similarity">
    <text evidence="1">Belongs to the DnaJ family.</text>
</comment>